<name>LYSW_SULAC</name>
<protein>
    <recommendedName>
        <fullName>Alpha-aminoadipate/glutamate carrier protein LysW</fullName>
    </recommendedName>
    <alternativeName>
        <fullName>AAA carrier protein LysW</fullName>
    </alternativeName>
</protein>
<feature type="chain" id="PRO_0000422975" description="Alpha-aminoadipate/glutamate carrier protein LysW">
    <location>
        <begin position="1"/>
        <end position="56"/>
    </location>
</feature>
<feature type="zinc finger region" description="TFIIB-type">
    <location>
        <begin position="1"/>
        <end position="34"/>
    </location>
</feature>
<feature type="short sequence motif" description="EDWGE" evidence="1">
    <location>
        <position position="50"/>
    </location>
</feature>
<feature type="binding site" evidence="1">
    <location>
        <position position="6"/>
    </location>
    <ligand>
        <name>Zn(2+)</name>
        <dbReference type="ChEBI" id="CHEBI:29105"/>
    </ligand>
</feature>
<feature type="binding site" evidence="1">
    <location>
        <position position="9"/>
    </location>
    <ligand>
        <name>Zn(2+)</name>
        <dbReference type="ChEBI" id="CHEBI:29105"/>
    </ligand>
</feature>
<feature type="binding site" evidence="1">
    <location>
        <position position="27"/>
    </location>
    <ligand>
        <name>Zn(2+)</name>
        <dbReference type="ChEBI" id="CHEBI:29105"/>
    </ligand>
</feature>
<feature type="binding site" evidence="1">
    <location>
        <position position="29"/>
    </location>
    <ligand>
        <name>Zn(2+)</name>
        <dbReference type="ChEBI" id="CHEBI:29105"/>
    </ligand>
</feature>
<feature type="modified residue" description="5-glutamyl 2-aminoadipic acid; alternate" evidence="2">
    <location>
        <position position="56"/>
    </location>
</feature>
<feature type="modified residue" description="5-glutamyl glutamate; alternate" evidence="2">
    <location>
        <position position="56"/>
    </location>
</feature>
<feature type="modified residue" description="5-glutamyl N2-lysine; alternate" evidence="2">
    <location>
        <position position="56"/>
    </location>
</feature>
<feature type="modified residue" description="5-glutamyl N2-ornithine; alternate" evidence="2">
    <location>
        <position position="56"/>
    </location>
</feature>
<proteinExistence type="evidence at protein level"/>
<keyword id="KW-0028">Amino-acid biosynthesis</keyword>
<keyword id="KW-0055">Arginine biosynthesis</keyword>
<keyword id="KW-1017">Isopeptide bond</keyword>
<keyword id="KW-0457">Lysine biosynthesis</keyword>
<keyword id="KW-0479">Metal-binding</keyword>
<keyword id="KW-1185">Reference proteome</keyword>
<keyword id="KW-0862">Zinc</keyword>
<keyword id="KW-0863">Zinc-finger</keyword>
<organism>
    <name type="scientific">Sulfolobus acidocaldarius (strain ATCC 33909 / DSM 639 / JCM 8929 / NBRC 15157 / NCIMB 11770)</name>
    <dbReference type="NCBI Taxonomy" id="330779"/>
    <lineage>
        <taxon>Archaea</taxon>
        <taxon>Thermoproteota</taxon>
        <taxon>Thermoprotei</taxon>
        <taxon>Sulfolobales</taxon>
        <taxon>Sulfolobaceae</taxon>
        <taxon>Sulfolobus</taxon>
    </lineage>
</organism>
<comment type="function">
    <text evidence="3">Carrier protein that bears the covalently bound substrates for arginine and lysine biosynthesis; bound L-glutamate is sequentially converted to L-ornithine, while bound alpha-aminoadipate (AAA) is sequentially converted to L-lysine.</text>
</comment>
<comment type="pathway">
    <text>Amino-acid biosynthesis; L-lysine biosynthesis via AAA pathway.</text>
</comment>
<comment type="pathway">
    <text>Amino-acid biosynthesis; L-arginine biosynthesis.</text>
</comment>
<comment type="subunit">
    <text evidence="1">Monomer.</text>
</comment>
<comment type="PTM">
    <text evidence="3">Formation of an isopeptide bond between the gamma-carboxyl group of the C-terminal glutamate and the amino group of alpha-aminoadipate (AAA) is catalyzed by LysX. The bound AAA is then converted to L-lysine in a series of reactions catalyzed by LysZ, LysY and LysJ. Release of the product L-lysine is catalyzed by LysK. Formation of an isopeptide bond between the gamma-carboxyl group of the C-terminal glutamate and the amino group of L-glutamate is catalyzed by ArgX. The bound substrate is then sequentially converted to ornithine which is eventually converted to L-arginine (PubMed:23434852).</text>
</comment>
<comment type="disruption phenotype">
    <text evidence="3">Cells lacking this gene require arginine and lysine for growth.</text>
</comment>
<accession>Q4JAQ0</accession>
<sequence>MVLLKCPICGNDVNVPDDSLPGEIVEHECGAQLEVFNSNGKLALRLAEQVGEDWGE</sequence>
<evidence type="ECO:0000250" key="1"/>
<evidence type="ECO:0000250" key="2">
    <source>
        <dbReference type="UniProtKB" id="Q976J8"/>
    </source>
</evidence>
<evidence type="ECO:0000269" key="3">
    <source>
    </source>
</evidence>
<dbReference type="EMBL" id="CP000077">
    <property type="protein sequence ID" value="AAY80129.1"/>
    <property type="molecule type" value="Genomic_DNA"/>
</dbReference>
<dbReference type="RefSeq" id="WP_011277631.1">
    <property type="nucleotide sequence ID" value="NC_007181.1"/>
</dbReference>
<dbReference type="SMR" id="Q4JAQ0"/>
<dbReference type="STRING" id="330779.Saci_0753"/>
<dbReference type="GeneID" id="14551271"/>
<dbReference type="KEGG" id="sai:Saci_0753"/>
<dbReference type="PATRIC" id="fig|330779.12.peg.722"/>
<dbReference type="eggNOG" id="arCOG01588">
    <property type="taxonomic scope" value="Archaea"/>
</dbReference>
<dbReference type="HOGENOM" id="CLU_195720_1_0_2"/>
<dbReference type="UniPathway" id="UPA00033"/>
<dbReference type="UniPathway" id="UPA00068"/>
<dbReference type="Proteomes" id="UP000001018">
    <property type="component" value="Chromosome"/>
</dbReference>
<dbReference type="GO" id="GO:0008270">
    <property type="term" value="F:zinc ion binding"/>
    <property type="evidence" value="ECO:0007669"/>
    <property type="project" value="UniProtKB-KW"/>
</dbReference>
<dbReference type="GO" id="GO:0006526">
    <property type="term" value="P:L-arginine biosynthetic process"/>
    <property type="evidence" value="ECO:0007669"/>
    <property type="project" value="UniProtKB-UniPathway"/>
</dbReference>
<dbReference type="GO" id="GO:0019878">
    <property type="term" value="P:lysine biosynthetic process via aminoadipic acid"/>
    <property type="evidence" value="ECO:0007669"/>
    <property type="project" value="UniProtKB-UniPathway"/>
</dbReference>
<dbReference type="CDD" id="cd13946">
    <property type="entry name" value="LysW"/>
    <property type="match status" value="1"/>
</dbReference>
<dbReference type="Gene3D" id="2.20.28.160">
    <property type="match status" value="1"/>
</dbReference>
<dbReference type="InterPro" id="IPR005906">
    <property type="entry name" value="LysW"/>
</dbReference>
<dbReference type="NCBIfam" id="NF041070">
    <property type="entry name" value="carrier_LysW_Arch"/>
    <property type="match status" value="1"/>
</dbReference>
<dbReference type="PANTHER" id="PTHR40393:SF2">
    <property type="entry name" value="ALPHA-AMINOADIPATE_GLUTAMATE CARRIER PROTEIN LYSW"/>
    <property type="match status" value="1"/>
</dbReference>
<dbReference type="PANTHER" id="PTHR40393">
    <property type="entry name" value="LYSINE BIOSYNTHESIS PROTEIN-RELATED-RELATED"/>
    <property type="match status" value="1"/>
</dbReference>
<dbReference type="Pfam" id="PF21344">
    <property type="entry name" value="Zn_ribbon_LysW"/>
    <property type="match status" value="1"/>
</dbReference>
<gene>
    <name type="primary">lysW</name>
    <name type="synonym">argW</name>
    <name type="ordered locus">Saci_0753</name>
</gene>
<reference key="1">
    <citation type="journal article" date="2005" name="J. Bacteriol.">
        <title>The genome of Sulfolobus acidocaldarius, a model organism of the Crenarchaeota.</title>
        <authorList>
            <person name="Chen L."/>
            <person name="Bruegger K."/>
            <person name="Skovgaard M."/>
            <person name="Redder P."/>
            <person name="She Q."/>
            <person name="Torarinsson E."/>
            <person name="Greve B."/>
            <person name="Awayez M."/>
            <person name="Zibat A."/>
            <person name="Klenk H.-P."/>
            <person name="Garrett R.A."/>
        </authorList>
    </citation>
    <scope>NUCLEOTIDE SEQUENCE [LARGE SCALE GENOMIC DNA]</scope>
    <source>
        <strain>ATCC 33909 / DSM 639 / JCM 8929 / NBRC 15157 / NCIMB 11770</strain>
    </source>
</reference>
<reference key="2">
    <citation type="journal article" date="2013" name="Nat. Chem. Biol.">
        <title>Lysine and arginine biosyntheses mediated by a common carrier protein in Sulfolobus.</title>
        <authorList>
            <person name="Ouchi T."/>
            <person name="Tomita T."/>
            <person name="Horie A."/>
            <person name="Yoshida A."/>
            <person name="Takahashi K."/>
            <person name="Nishida H."/>
            <person name="Lassak K."/>
            <person name="Taka H."/>
            <person name="Mineki R."/>
            <person name="Fujimura T."/>
            <person name="Kosono S."/>
            <person name="Nishiyama C."/>
            <person name="Masui R."/>
            <person name="Kuramitsu S."/>
            <person name="Albers S.V."/>
            <person name="Kuzuyama T."/>
            <person name="Nishiyama M."/>
        </authorList>
    </citation>
    <scope>FUNCTION</scope>
    <scope>IDENTIFICATION BY MASS SPECTROMETRY</scope>
    <scope>DISRUPTION PHENOTYPE</scope>
</reference>